<organism>
    <name type="scientific">Buchnera aphidicola subsp. Cinara cedri (strain Cc)</name>
    <dbReference type="NCBI Taxonomy" id="372461"/>
    <lineage>
        <taxon>Bacteria</taxon>
        <taxon>Pseudomonadati</taxon>
        <taxon>Pseudomonadota</taxon>
        <taxon>Gammaproteobacteria</taxon>
        <taxon>Enterobacterales</taxon>
        <taxon>Erwiniaceae</taxon>
        <taxon>Buchnera</taxon>
    </lineage>
</organism>
<proteinExistence type="inferred from homology"/>
<keyword id="KW-0028">Amino-acid biosynthesis</keyword>
<keyword id="KW-0963">Cytoplasm</keyword>
<keyword id="KW-0554">One-carbon metabolism</keyword>
<keyword id="KW-0663">Pyridoxal phosphate</keyword>
<keyword id="KW-1185">Reference proteome</keyword>
<keyword id="KW-0808">Transferase</keyword>
<protein>
    <recommendedName>
        <fullName evidence="1">Serine hydroxymethyltransferase</fullName>
        <shortName evidence="1">SHMT</shortName>
        <shortName evidence="1">Serine methylase</shortName>
        <ecNumber evidence="1">2.1.2.1</ecNumber>
    </recommendedName>
</protein>
<sequence length="417" mass="46861">MINTNLKNYDPKIWKLIIKEKKRQESYINLIASENYVSSSILEAQGSCLTNKYAEGYIGNRFYNGCNIIDKIEKIAIKRAKKLFNVEYVNVQPHSGSQANFSVFNALLKPNDIILGMNLNHGGHLTHGSTVNFSGKLYKSFSYGVNKCGEIDYDALKYLSHLHRPKMIIGGFSAYSGICDWKYMRKIADEINAYFFVDISHIVGLIVAGIYPNPLKYAHVVSTTTHKTLGGPRGGLIISNCGNKKIYSKLDSSVFPGSQGGPLMHVIAAKAISFKEALEPKFFLLQKNILFFSKKMVKIFLKRNFSVISGKTNNHLFLIDLSEKKISGKEASNILALARIIVNKNTIPNDSQSPYITSGIRIGTPAIVKRGISIKYVIKITNWICDILNEPNNLIKIKKISKKIKKICYKYPIYNKI</sequence>
<reference key="1">
    <citation type="journal article" date="2006" name="Science">
        <title>A small microbial genome: the end of a long symbiotic relationship?</title>
        <authorList>
            <person name="Perez-Brocal V."/>
            <person name="Gil R."/>
            <person name="Ramos S."/>
            <person name="Lamelas A."/>
            <person name="Postigo M."/>
            <person name="Michelena J.M."/>
            <person name="Silva F.J."/>
            <person name="Moya A."/>
            <person name="Latorre A."/>
        </authorList>
    </citation>
    <scope>NUCLEOTIDE SEQUENCE [LARGE SCALE GENOMIC DNA]</scope>
    <source>
        <strain>Cc</strain>
    </source>
</reference>
<feature type="chain" id="PRO_0000369902" description="Serine hydroxymethyltransferase">
    <location>
        <begin position="1"/>
        <end position="417"/>
    </location>
</feature>
<feature type="binding site" evidence="1">
    <location>
        <position position="119"/>
    </location>
    <ligand>
        <name>(6S)-5,6,7,8-tetrahydrofolate</name>
        <dbReference type="ChEBI" id="CHEBI:57453"/>
    </ligand>
</feature>
<feature type="binding site" evidence="1">
    <location>
        <begin position="123"/>
        <end position="125"/>
    </location>
    <ligand>
        <name>(6S)-5,6,7,8-tetrahydrofolate</name>
        <dbReference type="ChEBI" id="CHEBI:57453"/>
    </ligand>
</feature>
<feature type="site" description="Plays an important role in substrate specificity" evidence="1">
    <location>
        <position position="226"/>
    </location>
</feature>
<feature type="modified residue" description="N6-(pyridoxal phosphate)lysine" evidence="1">
    <location>
        <position position="227"/>
    </location>
</feature>
<accession>Q057P9</accession>
<comment type="function">
    <text evidence="1">Catalyzes the reversible interconversion of serine and glycine with tetrahydrofolate (THF) serving as the one-carbon carrier. This reaction serves as the major source of one-carbon groups required for the biosynthesis of purines, thymidylate, methionine, and other important biomolecules. Also exhibits THF-independent aldolase activity toward beta-hydroxyamino acids, producing glycine and aldehydes, via a retro-aldol mechanism.</text>
</comment>
<comment type="catalytic activity">
    <reaction evidence="1">
        <text>(6R)-5,10-methylene-5,6,7,8-tetrahydrofolate + glycine + H2O = (6S)-5,6,7,8-tetrahydrofolate + L-serine</text>
        <dbReference type="Rhea" id="RHEA:15481"/>
        <dbReference type="ChEBI" id="CHEBI:15377"/>
        <dbReference type="ChEBI" id="CHEBI:15636"/>
        <dbReference type="ChEBI" id="CHEBI:33384"/>
        <dbReference type="ChEBI" id="CHEBI:57305"/>
        <dbReference type="ChEBI" id="CHEBI:57453"/>
        <dbReference type="EC" id="2.1.2.1"/>
    </reaction>
</comment>
<comment type="cofactor">
    <cofactor evidence="1">
        <name>pyridoxal 5'-phosphate</name>
        <dbReference type="ChEBI" id="CHEBI:597326"/>
    </cofactor>
</comment>
<comment type="pathway">
    <text evidence="1">One-carbon metabolism; tetrahydrofolate interconversion.</text>
</comment>
<comment type="pathway">
    <text evidence="1">Amino-acid biosynthesis; glycine biosynthesis; glycine from L-serine: step 1/1.</text>
</comment>
<comment type="subunit">
    <text evidence="1">Homodimer.</text>
</comment>
<comment type="subcellular location">
    <subcellularLocation>
        <location evidence="1">Cytoplasm</location>
    </subcellularLocation>
</comment>
<comment type="similarity">
    <text evidence="1">Belongs to the SHMT family.</text>
</comment>
<dbReference type="EC" id="2.1.2.1" evidence="1"/>
<dbReference type="EMBL" id="CP000263">
    <property type="protein sequence ID" value="ABJ90650.1"/>
    <property type="molecule type" value="Genomic_DNA"/>
</dbReference>
<dbReference type="RefSeq" id="WP_011672569.1">
    <property type="nucleotide sequence ID" value="NC_008513.1"/>
</dbReference>
<dbReference type="SMR" id="Q057P9"/>
<dbReference type="STRING" id="372461.BCc_178"/>
<dbReference type="KEGG" id="bcc:BCc_178"/>
<dbReference type="eggNOG" id="COG0112">
    <property type="taxonomic scope" value="Bacteria"/>
</dbReference>
<dbReference type="HOGENOM" id="CLU_022477_2_1_6"/>
<dbReference type="OrthoDB" id="9803846at2"/>
<dbReference type="UniPathway" id="UPA00193"/>
<dbReference type="UniPathway" id="UPA00288">
    <property type="reaction ID" value="UER01023"/>
</dbReference>
<dbReference type="Proteomes" id="UP000000669">
    <property type="component" value="Chromosome"/>
</dbReference>
<dbReference type="GO" id="GO:0005829">
    <property type="term" value="C:cytosol"/>
    <property type="evidence" value="ECO:0007669"/>
    <property type="project" value="TreeGrafter"/>
</dbReference>
<dbReference type="GO" id="GO:0004372">
    <property type="term" value="F:glycine hydroxymethyltransferase activity"/>
    <property type="evidence" value="ECO:0007669"/>
    <property type="project" value="UniProtKB-UniRule"/>
</dbReference>
<dbReference type="GO" id="GO:0030170">
    <property type="term" value="F:pyridoxal phosphate binding"/>
    <property type="evidence" value="ECO:0007669"/>
    <property type="project" value="UniProtKB-UniRule"/>
</dbReference>
<dbReference type="GO" id="GO:0019264">
    <property type="term" value="P:glycine biosynthetic process from serine"/>
    <property type="evidence" value="ECO:0007669"/>
    <property type="project" value="UniProtKB-UniRule"/>
</dbReference>
<dbReference type="GO" id="GO:0035999">
    <property type="term" value="P:tetrahydrofolate interconversion"/>
    <property type="evidence" value="ECO:0007669"/>
    <property type="project" value="UniProtKB-UniRule"/>
</dbReference>
<dbReference type="CDD" id="cd00378">
    <property type="entry name" value="SHMT"/>
    <property type="match status" value="1"/>
</dbReference>
<dbReference type="FunFam" id="3.40.640.10:FF:000001">
    <property type="entry name" value="Serine hydroxymethyltransferase"/>
    <property type="match status" value="1"/>
</dbReference>
<dbReference type="Gene3D" id="3.90.1150.10">
    <property type="entry name" value="Aspartate Aminotransferase, domain 1"/>
    <property type="match status" value="1"/>
</dbReference>
<dbReference type="Gene3D" id="3.40.640.10">
    <property type="entry name" value="Type I PLP-dependent aspartate aminotransferase-like (Major domain)"/>
    <property type="match status" value="1"/>
</dbReference>
<dbReference type="HAMAP" id="MF_00051">
    <property type="entry name" value="SHMT"/>
    <property type="match status" value="1"/>
</dbReference>
<dbReference type="InterPro" id="IPR015424">
    <property type="entry name" value="PyrdxlP-dep_Trfase"/>
</dbReference>
<dbReference type="InterPro" id="IPR015421">
    <property type="entry name" value="PyrdxlP-dep_Trfase_major"/>
</dbReference>
<dbReference type="InterPro" id="IPR015422">
    <property type="entry name" value="PyrdxlP-dep_Trfase_small"/>
</dbReference>
<dbReference type="InterPro" id="IPR001085">
    <property type="entry name" value="Ser_HO-MeTrfase"/>
</dbReference>
<dbReference type="InterPro" id="IPR049943">
    <property type="entry name" value="Ser_HO-MeTrfase-like"/>
</dbReference>
<dbReference type="InterPro" id="IPR019798">
    <property type="entry name" value="Ser_HO-MeTrfase_PLP_BS"/>
</dbReference>
<dbReference type="InterPro" id="IPR039429">
    <property type="entry name" value="SHMT-like_dom"/>
</dbReference>
<dbReference type="NCBIfam" id="NF000586">
    <property type="entry name" value="PRK00011.1"/>
    <property type="match status" value="1"/>
</dbReference>
<dbReference type="PANTHER" id="PTHR11680">
    <property type="entry name" value="SERINE HYDROXYMETHYLTRANSFERASE"/>
    <property type="match status" value="1"/>
</dbReference>
<dbReference type="PANTHER" id="PTHR11680:SF50">
    <property type="entry name" value="SERINE HYDROXYMETHYLTRANSFERASE"/>
    <property type="match status" value="1"/>
</dbReference>
<dbReference type="Pfam" id="PF00464">
    <property type="entry name" value="SHMT"/>
    <property type="match status" value="1"/>
</dbReference>
<dbReference type="PIRSF" id="PIRSF000412">
    <property type="entry name" value="SHMT"/>
    <property type="match status" value="1"/>
</dbReference>
<dbReference type="SUPFAM" id="SSF53383">
    <property type="entry name" value="PLP-dependent transferases"/>
    <property type="match status" value="1"/>
</dbReference>
<dbReference type="PROSITE" id="PS00096">
    <property type="entry name" value="SHMT"/>
    <property type="match status" value="1"/>
</dbReference>
<name>GLYA_BUCCC</name>
<evidence type="ECO:0000255" key="1">
    <source>
        <dbReference type="HAMAP-Rule" id="MF_00051"/>
    </source>
</evidence>
<gene>
    <name evidence="1" type="primary">glyA</name>
    <name type="ordered locus">BCc_178</name>
</gene>